<feature type="chain" id="PRO_0000286983" description="Zinc finger protein GLIS2">
    <location>
        <begin position="1"/>
        <end position="524"/>
    </location>
</feature>
<feature type="zinc finger region" description="C2H2-type 1" evidence="2">
    <location>
        <begin position="168"/>
        <end position="193"/>
    </location>
</feature>
<feature type="zinc finger region" description="C2H2-type 2; atypical" evidence="2">
    <location>
        <begin position="202"/>
        <end position="229"/>
    </location>
</feature>
<feature type="zinc finger region" description="C2H2-type 3" evidence="2">
    <location>
        <begin position="235"/>
        <end position="257"/>
    </location>
</feature>
<feature type="zinc finger region" description="C2H2-type 4" evidence="2">
    <location>
        <begin position="263"/>
        <end position="287"/>
    </location>
</feature>
<feature type="zinc finger region" description="C2H2-type 5" evidence="2">
    <location>
        <begin position="293"/>
        <end position="317"/>
    </location>
</feature>
<feature type="region of interest" description="Interaction with CTNND1" evidence="1">
    <location>
        <begin position="35"/>
        <end position="174"/>
    </location>
</feature>
<feature type="region of interest" description="Disordered" evidence="3">
    <location>
        <begin position="39"/>
        <end position="62"/>
    </location>
</feature>
<feature type="region of interest" description="Transcription activation" evidence="1">
    <location>
        <begin position="71"/>
        <end position="137"/>
    </location>
</feature>
<feature type="region of interest" description="Disordered" evidence="3">
    <location>
        <begin position="84"/>
        <end position="114"/>
    </location>
</feature>
<feature type="region of interest" description="Transcription repression" evidence="1">
    <location>
        <begin position="148"/>
        <end position="171"/>
    </location>
</feature>
<feature type="region of interest" description="Disordered" evidence="3">
    <location>
        <begin position="439"/>
        <end position="480"/>
    </location>
</feature>
<feature type="compositionally biased region" description="Low complexity" evidence="3">
    <location>
        <begin position="84"/>
        <end position="100"/>
    </location>
</feature>
<feature type="compositionally biased region" description="Basic and acidic residues" evidence="3">
    <location>
        <begin position="459"/>
        <end position="469"/>
    </location>
</feature>
<feature type="site" description="Cleavage" evidence="1">
    <location>
        <begin position="287"/>
        <end position="288"/>
    </location>
</feature>
<feature type="sequence variant" id="VAR_032256" description="In dbSNP:rs8057701.">
    <original>T</original>
    <variation>A</variation>
    <location>
        <position position="492"/>
    </location>
</feature>
<feature type="sequence conflict" description="In Ref. 1; AAK00954." evidence="8" ref="1">
    <original>P</original>
    <variation>L</variation>
    <location>
        <position position="49"/>
    </location>
</feature>
<name>GLIS2_HUMAN</name>
<organism>
    <name type="scientific">Homo sapiens</name>
    <name type="common">Human</name>
    <dbReference type="NCBI Taxonomy" id="9606"/>
    <lineage>
        <taxon>Eukaryota</taxon>
        <taxon>Metazoa</taxon>
        <taxon>Chordata</taxon>
        <taxon>Craniata</taxon>
        <taxon>Vertebrata</taxon>
        <taxon>Euteleostomi</taxon>
        <taxon>Mammalia</taxon>
        <taxon>Eutheria</taxon>
        <taxon>Euarchontoglires</taxon>
        <taxon>Primates</taxon>
        <taxon>Haplorrhini</taxon>
        <taxon>Catarrhini</taxon>
        <taxon>Hominidae</taxon>
        <taxon>Homo</taxon>
    </lineage>
</organism>
<comment type="function">
    <text evidence="1">Can act either as a transcriptional repressor or as a transcriptional activator, depending on the cell context. Acts as a repressor of the Hedgehog signaling pathway (By similarity). Represses the Hedgehog-dependent expression of Wnt4 (By similarity). Necessary to maintain the differentiated epithelial phenotype in renal cells through the inhibition of SNAI1, which itself induces the epithelial-to-mesenchymal transition (By similarity). Represses transcriptional activation mediated by CTNNB1 in the Wnt signaling pathway. May act by recruiting the corepressors CTBP1 and HDAC3. May be involved in neuron differentiation (By similarity).</text>
</comment>
<comment type="subunit">
    <text evidence="1 6">Interacts with CTBP1 and HDAC3 (By similarity). Interacts with CTNNB1 (By similarity). Interacts with SUFU (By similarity). Interacts with CTNND1.</text>
</comment>
<comment type="interaction">
    <interactant intactId="EBI-7251368">
        <id>Q9BZE0</id>
    </interactant>
    <interactant intactId="EBI-11976299">
        <id>Q5BKX5-3</id>
        <label>ACTMAP</label>
    </interactant>
    <organismsDiffer>false</organismsDiffer>
    <experiments>5</experiments>
</comment>
<comment type="interaction">
    <interactant intactId="EBI-7251368">
        <id>Q9BZE0</id>
    </interactant>
    <interactant intactId="EBI-2880652">
        <id>Q08043</id>
        <label>ACTN3</label>
    </interactant>
    <organismsDiffer>false</organismsDiffer>
    <experiments>3</experiments>
</comment>
<comment type="interaction">
    <interactant intactId="EBI-7251368">
        <id>Q9BZE0</id>
    </interactant>
    <interactant intactId="EBI-11745576">
        <id>Q6PJH3</id>
        <label>AKAP9</label>
    </interactant>
    <organismsDiffer>false</organismsDiffer>
    <experiments>3</experiments>
</comment>
<comment type="interaction">
    <interactant intactId="EBI-7251368">
        <id>Q9BZE0</id>
    </interactant>
    <interactant intactId="EBI-12170453">
        <id>Q8N2N9-4</id>
        <label>ANKRD36B</label>
    </interactant>
    <organismsDiffer>false</organismsDiffer>
    <experiments>3</experiments>
</comment>
<comment type="interaction">
    <interactant intactId="EBI-7251368">
        <id>Q9BZE0</id>
    </interactant>
    <interactant intactId="EBI-948603">
        <id>Q03989</id>
        <label>ARID5A</label>
    </interactant>
    <organismsDiffer>false</organismsDiffer>
    <experiments>3</experiments>
</comment>
<comment type="interaction">
    <interactant intactId="EBI-7251368">
        <id>Q9BZE0</id>
    </interactant>
    <interactant intactId="EBI-702093">
        <id>P56945</id>
        <label>BCAR1</label>
    </interactant>
    <organismsDiffer>false</organismsDiffer>
    <experiments>3</experiments>
</comment>
<comment type="interaction">
    <interactant intactId="EBI-7251368">
        <id>Q9BZE0</id>
    </interactant>
    <interactant intactId="EBI-12884642">
        <id>Q03060-25</id>
        <label>CREM</label>
    </interactant>
    <organismsDiffer>false</organismsDiffer>
    <experiments>3</experiments>
</comment>
<comment type="interaction">
    <interactant intactId="EBI-7251368">
        <id>Q9BZE0</id>
    </interactant>
    <interactant intactId="EBI-748171">
        <id>O43186</id>
        <label>CRX</label>
    </interactant>
    <organismsDiffer>false</organismsDiffer>
    <experiments>3</experiments>
</comment>
<comment type="interaction">
    <interactant intactId="EBI-7251368">
        <id>Q9BZE0</id>
    </interactant>
    <interactant intactId="EBI-348169">
        <id>P67870</id>
        <label>CSNK2B</label>
    </interactant>
    <organismsDiffer>false</organismsDiffer>
    <experiments>3</experiments>
</comment>
<comment type="interaction">
    <interactant intactId="EBI-7251368">
        <id>Q9BZE0</id>
    </interactant>
    <interactant intactId="EBI-10171902">
        <id>P56545-3</id>
        <label>CTBP2</label>
    </interactant>
    <organismsDiffer>false</organismsDiffer>
    <experiments>3</experiments>
</comment>
<comment type="interaction">
    <interactant intactId="EBI-7251368">
        <id>Q9BZE0</id>
    </interactant>
    <interactant intactId="EBI-491549">
        <id>P35222</id>
        <label>CTNNB1</label>
    </interactant>
    <organismsDiffer>false</organismsDiffer>
    <experiments>6</experiments>
</comment>
<comment type="interaction">
    <interactant intactId="EBI-7251368">
        <id>Q9BZE0</id>
    </interactant>
    <interactant intactId="EBI-12193763">
        <id>A1KXE4-2</id>
        <label>FAM168B</label>
    </interactant>
    <organismsDiffer>false</organismsDiffer>
    <experiments>3</experiments>
</comment>
<comment type="interaction">
    <interactant intactId="EBI-7251368">
        <id>Q9BZE0</id>
    </interactant>
    <interactant intactId="EBI-2806743">
        <id>P53539</id>
        <label>FOSB</label>
    </interactant>
    <organismsDiffer>false</organismsDiffer>
    <experiments>3</experiments>
</comment>
<comment type="interaction">
    <interactant intactId="EBI-7251368">
        <id>Q9BZE0</id>
    </interactant>
    <interactant intactId="EBI-371669">
        <id>O75496</id>
        <label>GMNN</label>
    </interactant>
    <organismsDiffer>false</organismsDiffer>
    <experiments>3</experiments>
</comment>
<comment type="interaction">
    <interactant intactId="EBI-7251368">
        <id>Q9BZE0</id>
    </interactant>
    <interactant intactId="EBI-5916454">
        <id>A6NEM1</id>
        <label>GOLGA6L9</label>
    </interactant>
    <organismsDiffer>false</organismsDiffer>
    <experiments>3</experiments>
</comment>
<comment type="interaction">
    <interactant intactId="EBI-7251368">
        <id>Q9BZE0</id>
    </interactant>
    <interactant intactId="EBI-10261098">
        <id>Q86YR5-3</id>
        <label>GPSM1</label>
    </interactant>
    <organismsDiffer>false</organismsDiffer>
    <experiments>3</experiments>
</comment>
<comment type="interaction">
    <interactant intactId="EBI-7251368">
        <id>Q9BZE0</id>
    </interactant>
    <interactant intactId="EBI-12020132">
        <id>Q7Z4W3</id>
        <label>KRTAP19-3</label>
    </interactant>
    <organismsDiffer>false</organismsDiffer>
    <experiments>3</experiments>
</comment>
<comment type="interaction">
    <interactant intactId="EBI-7251368">
        <id>Q9BZE0</id>
    </interactant>
    <interactant intactId="EBI-1048945">
        <id>Q3LI72</id>
        <label>KRTAP19-5</label>
    </interactant>
    <organismsDiffer>false</organismsDiffer>
    <experiments>5</experiments>
</comment>
<comment type="interaction">
    <interactant intactId="EBI-7251368">
        <id>Q9BZE0</id>
    </interactant>
    <interactant intactId="EBI-10241353">
        <id>Q3SYF9</id>
        <label>KRTAP19-7</label>
    </interactant>
    <organismsDiffer>false</organismsDiffer>
    <experiments>3</experiments>
</comment>
<comment type="interaction">
    <interactant intactId="EBI-7251368">
        <id>Q9BZE0</id>
    </interactant>
    <interactant intactId="EBI-12111050">
        <id>Q3LI64</id>
        <label>KRTAP6-1</label>
    </interactant>
    <organismsDiffer>false</organismsDiffer>
    <experiments>3</experiments>
</comment>
<comment type="interaction">
    <interactant intactId="EBI-7251368">
        <id>Q9BZE0</id>
    </interactant>
    <interactant intactId="EBI-11962084">
        <id>Q3LI66</id>
        <label>KRTAP6-2</label>
    </interactant>
    <organismsDiffer>false</organismsDiffer>
    <experiments>5</experiments>
</comment>
<comment type="interaction">
    <interactant intactId="EBI-7251368">
        <id>Q9BZE0</id>
    </interactant>
    <interactant intactId="EBI-10261141">
        <id>Q8IUC2</id>
        <label>KRTAP8-1</label>
    </interactant>
    <organismsDiffer>false</organismsDiffer>
    <experiments>3</experiments>
</comment>
<comment type="interaction">
    <interactant intactId="EBI-7251368">
        <id>Q9BZE0</id>
    </interactant>
    <interactant intactId="EBI-744782">
        <id>Q9Y5B8</id>
        <label>NME7</label>
    </interactant>
    <organismsDiffer>false</organismsDiffer>
    <experiments>3</experiments>
</comment>
<comment type="interaction">
    <interactant intactId="EBI-7251368">
        <id>Q9BZE0</id>
    </interactant>
    <interactant intactId="EBI-536879">
        <id>O43482</id>
        <label>OIP5</label>
    </interactant>
    <organismsDiffer>false</organismsDiffer>
    <experiments>3</experiments>
</comment>
<comment type="interaction">
    <interactant intactId="EBI-7251368">
        <id>Q9BZE0</id>
    </interactant>
    <interactant intactId="EBI-12832742">
        <id>Q9UF11-2</id>
        <label>PLEKHB1</label>
    </interactant>
    <organismsDiffer>false</organismsDiffer>
    <experiments>3</experiments>
</comment>
<comment type="interaction">
    <interactant intactId="EBI-7251368">
        <id>Q9BZE0</id>
    </interactant>
    <interactant intactId="EBI-373552">
        <id>Q96CS7</id>
        <label>PLEKHB2</label>
    </interactant>
    <organismsDiffer>false</organismsDiffer>
    <experiments>5</experiments>
</comment>
<comment type="interaction">
    <interactant intactId="EBI-7251368">
        <id>Q9BZE0</id>
    </interactant>
    <interactant intactId="EBI-12029004">
        <id>P78424</id>
        <label>POU6F2</label>
    </interactant>
    <organismsDiffer>false</organismsDiffer>
    <experiments>3</experiments>
</comment>
<comment type="interaction">
    <interactant intactId="EBI-7251368">
        <id>Q9BZE0</id>
    </interactant>
    <interactant intactId="EBI-2805516">
        <id>P31321</id>
        <label>PRKAR1B</label>
    </interactant>
    <organismsDiffer>false</organismsDiffer>
    <experiments>3</experiments>
</comment>
<comment type="interaction">
    <interactant intactId="EBI-7251368">
        <id>Q9BZE0</id>
    </interactant>
    <interactant intactId="EBI-12754095">
        <id>P86480</id>
        <label>PRR20D</label>
    </interactant>
    <organismsDiffer>false</organismsDiffer>
    <experiments>3</experiments>
</comment>
<comment type="interaction">
    <interactant intactId="EBI-7251368">
        <id>Q9BZE0</id>
    </interactant>
    <interactant intactId="EBI-741332">
        <id>P57052</id>
        <label>RBM11</label>
    </interactant>
    <organismsDiffer>false</organismsDiffer>
    <experiments>3</experiments>
</comment>
<comment type="interaction">
    <interactant intactId="EBI-7251368">
        <id>Q9BZE0</id>
    </interactant>
    <interactant intactId="EBI-740343">
        <id>Q93062-3</id>
        <label>RBPMS</label>
    </interactant>
    <organismsDiffer>false</organismsDiffer>
    <experiments>3</experiments>
</comment>
<comment type="interaction">
    <interactant intactId="EBI-7251368">
        <id>Q9BZE0</id>
    </interactant>
    <interactant intactId="EBI-12825957">
        <id>O15266-2</id>
        <label>SHOX</label>
    </interactant>
    <organismsDiffer>false</organismsDiffer>
    <experiments>3</experiments>
</comment>
<comment type="interaction">
    <interactant intactId="EBI-7251368">
        <id>Q9BZE0</id>
    </interactant>
    <interactant intactId="EBI-11741437">
        <id>Q08117-2</id>
        <label>TLE5</label>
    </interactant>
    <organismsDiffer>false</organismsDiffer>
    <experiments>3</experiments>
</comment>
<comment type="interaction">
    <interactant intactId="EBI-7251368">
        <id>Q9BZE0</id>
    </interactant>
    <interactant intactId="EBI-12806590">
        <id>Q86WV8</id>
        <label>TSC1</label>
    </interactant>
    <organismsDiffer>false</organismsDiffer>
    <experiments>3</experiments>
</comment>
<comment type="interaction">
    <interactant intactId="EBI-7251368">
        <id>Q9BZE0</id>
    </interactant>
    <interactant intactId="EBI-1797313">
        <id>Q8WVJ9</id>
        <label>TWIST2</label>
    </interactant>
    <organismsDiffer>false</organismsDiffer>
    <experiments>3</experiments>
</comment>
<comment type="interaction">
    <interactant intactId="EBI-7251368">
        <id>Q9BZE0</id>
    </interactant>
    <interactant intactId="EBI-2107455">
        <id>Q08AM6</id>
        <label>VAC14</label>
    </interactant>
    <organismsDiffer>false</organismsDiffer>
    <experiments>3</experiments>
</comment>
<comment type="interaction">
    <interactant intactId="EBI-7251368">
        <id>Q9BZE0</id>
    </interactant>
    <interactant intactId="EBI-357430">
        <id>P61758</id>
        <label>VBP1</label>
    </interactant>
    <organismsDiffer>false</organismsDiffer>
    <experiments>3</experiments>
</comment>
<comment type="interaction">
    <interactant intactId="EBI-7251368">
        <id>Q9BZE0</id>
    </interactant>
    <interactant intactId="EBI-10191303">
        <id>O95231</id>
        <label>VENTX</label>
    </interactant>
    <organismsDiffer>false</organismsDiffer>
    <experiments>3</experiments>
</comment>
<comment type="interaction">
    <interactant intactId="EBI-7251368">
        <id>Q9BZE0</id>
    </interactant>
    <interactant intactId="EBI-12040603">
        <id>Q9NZC7-5</id>
        <label>WWOX</label>
    </interactant>
    <organismsDiffer>false</organismsDiffer>
    <experiments>3</experiments>
</comment>
<comment type="interaction">
    <interactant intactId="EBI-7251368">
        <id>Q9BZE0</id>
    </interactant>
    <interactant intactId="EBI-527853">
        <id>Q9UGI0</id>
        <label>ZRANB1</label>
    </interactant>
    <organismsDiffer>false</organismsDiffer>
    <experiments>3</experiments>
</comment>
<comment type="subcellular location">
    <subcellularLocation>
        <location evidence="1">Nucleus speckle</location>
    </subcellularLocation>
    <subcellularLocation>
        <location evidence="1">Cytoplasm</location>
    </subcellularLocation>
</comment>
<comment type="tissue specificity">
    <text evidence="4 5">Expressed at high levels in kidney and at low levels in heart, lung and placenta. Expressed in colon.</text>
</comment>
<comment type="domain">
    <text evidence="1">The C2H2-type zinc finger 1 has a major repressor function and is required for CTNNB1 binding.</text>
</comment>
<comment type="PTM">
    <text evidence="1">C-terminus cleavage is induced by interaction with CTNND1 and enhanced by Src tyrosine kinase.</text>
</comment>
<comment type="disease" evidence="7">
    <disease id="DI-00807">
        <name>Nephronophthisis 7</name>
        <acronym>NPHP7</acronym>
        <description>An autosomal recessive disorder resulting in end-stage renal disease during childhood or adolescence. It is a progressive tubulo-interstitial kidney disorder histologically characterized by modifications of the tubules with thickening of the basement membrane, interstitial fibrosis and, in the advanced stages, medullary cysts.</description>
        <dbReference type="MIM" id="611498"/>
    </disease>
    <text>The disease is caused by variants affecting the gene represented in this entry.</text>
</comment>
<comment type="similarity">
    <text evidence="8">Belongs to the GLI C2H2-type zinc-finger protein family.</text>
</comment>
<dbReference type="EMBL" id="AF325914">
    <property type="protein sequence ID" value="AAK00954.1"/>
    <property type="molecule type" value="mRNA"/>
</dbReference>
<dbReference type="EMBL" id="AK126918">
    <property type="protein sequence ID" value="BAG54396.1"/>
    <property type="molecule type" value="mRNA"/>
</dbReference>
<dbReference type="EMBL" id="AC005356">
    <property type="status" value="NOT_ANNOTATED_CDS"/>
    <property type="molecule type" value="Genomic_DNA"/>
</dbReference>
<dbReference type="EMBL" id="AC012676">
    <property type="status" value="NOT_ANNOTATED_CDS"/>
    <property type="molecule type" value="Genomic_DNA"/>
</dbReference>
<dbReference type="EMBL" id="CH471112">
    <property type="protein sequence ID" value="EAW85317.1"/>
    <property type="molecule type" value="Genomic_DNA"/>
</dbReference>
<dbReference type="EMBL" id="CH471112">
    <property type="protein sequence ID" value="EAW85318.1"/>
    <property type="molecule type" value="Genomic_DNA"/>
</dbReference>
<dbReference type="CCDS" id="CCDS10511.1"/>
<dbReference type="RefSeq" id="NP_001305847.1">
    <property type="nucleotide sequence ID" value="NM_001318918.2"/>
</dbReference>
<dbReference type="RefSeq" id="NP_115964.2">
    <property type="nucleotide sequence ID" value="NM_032575.3"/>
</dbReference>
<dbReference type="RefSeq" id="XP_005255698.1">
    <property type="nucleotide sequence ID" value="XM_005255641.4"/>
</dbReference>
<dbReference type="SMR" id="Q9BZE0"/>
<dbReference type="BioGRID" id="124182">
    <property type="interactions" value="121"/>
</dbReference>
<dbReference type="CORUM" id="Q9BZE0"/>
<dbReference type="FunCoup" id="Q9BZE0">
    <property type="interactions" value="1794"/>
</dbReference>
<dbReference type="IntAct" id="Q9BZE0">
    <property type="interactions" value="55"/>
</dbReference>
<dbReference type="MINT" id="Q9BZE0"/>
<dbReference type="STRING" id="9606.ENSP00000262366"/>
<dbReference type="BindingDB" id="Q9BZE0"/>
<dbReference type="GlyGen" id="Q9BZE0">
    <property type="glycosylation" value="1 site"/>
</dbReference>
<dbReference type="iPTMnet" id="Q9BZE0"/>
<dbReference type="PhosphoSitePlus" id="Q9BZE0"/>
<dbReference type="BioMuta" id="GLIS2"/>
<dbReference type="DMDM" id="296434515"/>
<dbReference type="jPOST" id="Q9BZE0"/>
<dbReference type="MassIVE" id="Q9BZE0"/>
<dbReference type="PaxDb" id="9606-ENSP00000262366"/>
<dbReference type="PeptideAtlas" id="Q9BZE0"/>
<dbReference type="ProteomicsDB" id="79818"/>
<dbReference type="Antibodypedia" id="11033">
    <property type="antibodies" value="116 antibodies from 23 providers"/>
</dbReference>
<dbReference type="DNASU" id="84662"/>
<dbReference type="Ensembl" id="ENST00000262366.7">
    <property type="protein sequence ID" value="ENSP00000262366.3"/>
    <property type="gene ID" value="ENSG00000126603.9"/>
</dbReference>
<dbReference type="Ensembl" id="ENST00000433375.2">
    <property type="protein sequence ID" value="ENSP00000395547.1"/>
    <property type="gene ID" value="ENSG00000126603.9"/>
</dbReference>
<dbReference type="Ensembl" id="ENST00000612491.1">
    <property type="protein sequence ID" value="ENSP00000484027.1"/>
    <property type="gene ID" value="ENSG00000274636.2"/>
</dbReference>
<dbReference type="Ensembl" id="ENST00000633051.1">
    <property type="protein sequence ID" value="ENSP00000488242.1"/>
    <property type="gene ID" value="ENSG00000274636.2"/>
</dbReference>
<dbReference type="GeneID" id="84662"/>
<dbReference type="KEGG" id="hsa:84662"/>
<dbReference type="MANE-Select" id="ENST00000433375.2">
    <property type="protein sequence ID" value="ENSP00000395547.1"/>
    <property type="RefSeq nucleotide sequence ID" value="NM_032575.3"/>
    <property type="RefSeq protein sequence ID" value="NP_115964.2"/>
</dbReference>
<dbReference type="UCSC" id="uc002cwc.2">
    <property type="organism name" value="human"/>
</dbReference>
<dbReference type="AGR" id="HGNC:29450"/>
<dbReference type="CTD" id="84662"/>
<dbReference type="DisGeNET" id="84662"/>
<dbReference type="GeneCards" id="GLIS2"/>
<dbReference type="GeneReviews" id="GLIS2"/>
<dbReference type="HGNC" id="HGNC:29450">
    <property type="gene designation" value="GLIS2"/>
</dbReference>
<dbReference type="HPA" id="ENSG00000126603">
    <property type="expression patterns" value="Low tissue specificity"/>
</dbReference>
<dbReference type="MalaCards" id="GLIS2"/>
<dbReference type="MIM" id="608539">
    <property type="type" value="gene"/>
</dbReference>
<dbReference type="MIM" id="611498">
    <property type="type" value="phenotype"/>
</dbReference>
<dbReference type="neXtProt" id="NX_Q9BZE0"/>
<dbReference type="OpenTargets" id="ENSG00000126603"/>
<dbReference type="Orphanet" id="329469">
    <property type="disease" value="Acute megakaryoblastic leukemia in children without Down syndrome"/>
</dbReference>
<dbReference type="Orphanet" id="93592">
    <property type="disease" value="Juvenile nephronophthisis"/>
</dbReference>
<dbReference type="PharmGKB" id="PA134919876"/>
<dbReference type="VEuPathDB" id="HostDB:ENSG00000126603"/>
<dbReference type="eggNOG" id="KOG1721">
    <property type="taxonomic scope" value="Eukaryota"/>
</dbReference>
<dbReference type="GeneTree" id="ENSGT00940000158383"/>
<dbReference type="HOGENOM" id="CLU_031801_1_0_1"/>
<dbReference type="InParanoid" id="Q9BZE0"/>
<dbReference type="OMA" id="EAGYCCH"/>
<dbReference type="OrthoDB" id="3214149at2759"/>
<dbReference type="PAN-GO" id="Q9BZE0">
    <property type="GO annotations" value="6 GO annotations based on evolutionary models"/>
</dbReference>
<dbReference type="PhylomeDB" id="Q9BZE0"/>
<dbReference type="TreeFam" id="TF351425"/>
<dbReference type="PathwayCommons" id="Q9BZE0"/>
<dbReference type="SignaLink" id="Q9BZE0"/>
<dbReference type="SIGNOR" id="Q9BZE0"/>
<dbReference type="BioGRID-ORCS" id="84662">
    <property type="hits" value="25 hits in 1172 CRISPR screens"/>
</dbReference>
<dbReference type="ChiTaRS" id="GLIS2">
    <property type="organism name" value="human"/>
</dbReference>
<dbReference type="GenomeRNAi" id="84662"/>
<dbReference type="Pharos" id="Q9BZE0">
    <property type="development level" value="Tbio"/>
</dbReference>
<dbReference type="PRO" id="PR:Q9BZE0"/>
<dbReference type="Proteomes" id="UP000005640">
    <property type="component" value="Chromosome 16"/>
</dbReference>
<dbReference type="RNAct" id="Q9BZE0">
    <property type="molecule type" value="protein"/>
</dbReference>
<dbReference type="Bgee" id="ENSG00000126603">
    <property type="expression patterns" value="Expressed in right coronary artery and 95 other cell types or tissues"/>
</dbReference>
<dbReference type="GO" id="GO:0005737">
    <property type="term" value="C:cytoplasm"/>
    <property type="evidence" value="ECO:0007669"/>
    <property type="project" value="UniProtKB-SubCell"/>
</dbReference>
<dbReference type="GO" id="GO:0097730">
    <property type="term" value="C:non-motile cilium"/>
    <property type="evidence" value="ECO:0007669"/>
    <property type="project" value="Ensembl"/>
</dbReference>
<dbReference type="GO" id="GO:0016607">
    <property type="term" value="C:nuclear speck"/>
    <property type="evidence" value="ECO:0000250"/>
    <property type="project" value="UniProtKB"/>
</dbReference>
<dbReference type="GO" id="GO:0005654">
    <property type="term" value="C:nucleoplasm"/>
    <property type="evidence" value="ECO:0000314"/>
    <property type="project" value="HPA"/>
</dbReference>
<dbReference type="GO" id="GO:0005634">
    <property type="term" value="C:nucleus"/>
    <property type="evidence" value="ECO:0000250"/>
    <property type="project" value="BHF-UCL"/>
</dbReference>
<dbReference type="GO" id="GO:0001228">
    <property type="term" value="F:DNA-binding transcription activator activity, RNA polymerase II-specific"/>
    <property type="evidence" value="ECO:0000250"/>
    <property type="project" value="BHF-UCL"/>
</dbReference>
<dbReference type="GO" id="GO:0000981">
    <property type="term" value="F:DNA-binding transcription factor activity, RNA polymerase II-specific"/>
    <property type="evidence" value="ECO:0000318"/>
    <property type="project" value="GO_Central"/>
</dbReference>
<dbReference type="GO" id="GO:0001227">
    <property type="term" value="F:DNA-binding transcription repressor activity, RNA polymerase II-specific"/>
    <property type="evidence" value="ECO:0000250"/>
    <property type="project" value="BHF-UCL"/>
</dbReference>
<dbReference type="GO" id="GO:0000978">
    <property type="term" value="F:RNA polymerase II cis-regulatory region sequence-specific DNA binding"/>
    <property type="evidence" value="ECO:0000318"/>
    <property type="project" value="GO_Central"/>
</dbReference>
<dbReference type="GO" id="GO:1990837">
    <property type="term" value="F:sequence-specific double-stranded DNA binding"/>
    <property type="evidence" value="ECO:0000314"/>
    <property type="project" value="ARUK-UCL"/>
</dbReference>
<dbReference type="GO" id="GO:0000976">
    <property type="term" value="F:transcription cis-regulatory region binding"/>
    <property type="evidence" value="ECO:0000250"/>
    <property type="project" value="BHF-UCL"/>
</dbReference>
<dbReference type="GO" id="GO:0008270">
    <property type="term" value="F:zinc ion binding"/>
    <property type="evidence" value="ECO:0007669"/>
    <property type="project" value="UniProtKB-KW"/>
</dbReference>
<dbReference type="GO" id="GO:0061005">
    <property type="term" value="P:cell differentiation involved in kidney development"/>
    <property type="evidence" value="ECO:0007669"/>
    <property type="project" value="Ensembl"/>
</dbReference>
<dbReference type="GO" id="GO:0007417">
    <property type="term" value="P:central nervous system development"/>
    <property type="evidence" value="ECO:0000318"/>
    <property type="project" value="GO_Central"/>
</dbReference>
<dbReference type="GO" id="GO:0061484">
    <property type="term" value="P:hematopoietic stem cell homeostasis"/>
    <property type="evidence" value="ECO:0007669"/>
    <property type="project" value="Ensembl"/>
</dbReference>
<dbReference type="GO" id="GO:0045892">
    <property type="term" value="P:negative regulation of DNA-templated transcription"/>
    <property type="evidence" value="ECO:0000250"/>
    <property type="project" value="UniProtKB"/>
</dbReference>
<dbReference type="GO" id="GO:0045879">
    <property type="term" value="P:negative regulation of smoothened signaling pathway"/>
    <property type="evidence" value="ECO:0000250"/>
    <property type="project" value="UniProtKB"/>
</dbReference>
<dbReference type="GO" id="GO:0000122">
    <property type="term" value="P:negative regulation of transcription by RNA polymerase II"/>
    <property type="evidence" value="ECO:0000250"/>
    <property type="project" value="BHF-UCL"/>
</dbReference>
<dbReference type="GO" id="GO:0045893">
    <property type="term" value="P:positive regulation of DNA-templated transcription"/>
    <property type="evidence" value="ECO:0000250"/>
    <property type="project" value="UniProtKB"/>
</dbReference>
<dbReference type="GO" id="GO:1900182">
    <property type="term" value="P:positive regulation of protein localization to nucleus"/>
    <property type="evidence" value="ECO:0007669"/>
    <property type="project" value="Ensembl"/>
</dbReference>
<dbReference type="GO" id="GO:0045944">
    <property type="term" value="P:positive regulation of transcription by RNA polymerase II"/>
    <property type="evidence" value="ECO:0000250"/>
    <property type="project" value="BHF-UCL"/>
</dbReference>
<dbReference type="FunFam" id="3.30.160.60:FF:000019">
    <property type="entry name" value="GLI family zinc finger 3"/>
    <property type="match status" value="1"/>
</dbReference>
<dbReference type="FunFam" id="3.30.160.60:FF:000310">
    <property type="entry name" value="GLIS family zinc finger 2"/>
    <property type="match status" value="1"/>
</dbReference>
<dbReference type="FunFam" id="3.30.160.60:FF:000357">
    <property type="entry name" value="GLIS family zinc finger 2"/>
    <property type="match status" value="1"/>
</dbReference>
<dbReference type="FunFam" id="3.30.160.60:FF:000359">
    <property type="entry name" value="GLIS family zinc finger 2"/>
    <property type="match status" value="1"/>
</dbReference>
<dbReference type="FunFam" id="3.30.160.60:FF:000532">
    <property type="entry name" value="GLIS family zinc finger 2"/>
    <property type="match status" value="1"/>
</dbReference>
<dbReference type="Gene3D" id="3.30.160.60">
    <property type="entry name" value="Classic Zinc Finger"/>
    <property type="match status" value="5"/>
</dbReference>
<dbReference type="InterPro" id="IPR043359">
    <property type="entry name" value="GLI-like"/>
</dbReference>
<dbReference type="InterPro" id="IPR056436">
    <property type="entry name" value="Znf-C2H2_ZIC1-5/GLI1-3-like"/>
</dbReference>
<dbReference type="InterPro" id="IPR036236">
    <property type="entry name" value="Znf_C2H2_sf"/>
</dbReference>
<dbReference type="InterPro" id="IPR013087">
    <property type="entry name" value="Znf_C2H2_type"/>
</dbReference>
<dbReference type="PANTHER" id="PTHR45718:SF8">
    <property type="entry name" value="GLIS FAMILY ZINC FINGER 2"/>
    <property type="match status" value="1"/>
</dbReference>
<dbReference type="PANTHER" id="PTHR45718">
    <property type="entry name" value="TRANSCRIPTIONAL ACTIVATOR CUBITUS INTERRUPTUS"/>
    <property type="match status" value="1"/>
</dbReference>
<dbReference type="Pfam" id="PF00096">
    <property type="entry name" value="zf-C2H2"/>
    <property type="match status" value="3"/>
</dbReference>
<dbReference type="Pfam" id="PF23561">
    <property type="entry name" value="zf-C2H2_15"/>
    <property type="match status" value="1"/>
</dbReference>
<dbReference type="SMART" id="SM00355">
    <property type="entry name" value="ZnF_C2H2"/>
    <property type="match status" value="5"/>
</dbReference>
<dbReference type="SUPFAM" id="SSF57667">
    <property type="entry name" value="beta-beta-alpha zinc fingers"/>
    <property type="match status" value="3"/>
</dbReference>
<dbReference type="PROSITE" id="PS00028">
    <property type="entry name" value="ZINC_FINGER_C2H2_1"/>
    <property type="match status" value="4"/>
</dbReference>
<dbReference type="PROSITE" id="PS50157">
    <property type="entry name" value="ZINC_FINGER_C2H2_2"/>
    <property type="match status" value="4"/>
</dbReference>
<reference key="1">
    <citation type="journal article" date="2001" name="Gene">
        <title>Genomic structure of the gene encoding the human GLI-related, Kruppel-like zinc finger protein GLIS2.</title>
        <authorList>
            <person name="Zhang F."/>
            <person name="Jetten A.M."/>
        </authorList>
    </citation>
    <scope>NUCLEOTIDE SEQUENCE [MRNA]</scope>
    <scope>TISSUE SPECIFICITY</scope>
    <source>
        <tissue>Kidney</tissue>
    </source>
</reference>
<reference key="2">
    <citation type="journal article" date="2004" name="Nat. Genet.">
        <title>Complete sequencing and characterization of 21,243 full-length human cDNAs.</title>
        <authorList>
            <person name="Ota T."/>
            <person name="Suzuki Y."/>
            <person name="Nishikawa T."/>
            <person name="Otsuki T."/>
            <person name="Sugiyama T."/>
            <person name="Irie R."/>
            <person name="Wakamatsu A."/>
            <person name="Hayashi K."/>
            <person name="Sato H."/>
            <person name="Nagai K."/>
            <person name="Kimura K."/>
            <person name="Makita H."/>
            <person name="Sekine M."/>
            <person name="Obayashi M."/>
            <person name="Nishi T."/>
            <person name="Shibahara T."/>
            <person name="Tanaka T."/>
            <person name="Ishii S."/>
            <person name="Yamamoto J."/>
            <person name="Saito K."/>
            <person name="Kawai Y."/>
            <person name="Isono Y."/>
            <person name="Nakamura Y."/>
            <person name="Nagahari K."/>
            <person name="Murakami K."/>
            <person name="Yasuda T."/>
            <person name="Iwayanagi T."/>
            <person name="Wagatsuma M."/>
            <person name="Shiratori A."/>
            <person name="Sudo H."/>
            <person name="Hosoiri T."/>
            <person name="Kaku Y."/>
            <person name="Kodaira H."/>
            <person name="Kondo H."/>
            <person name="Sugawara M."/>
            <person name="Takahashi M."/>
            <person name="Kanda K."/>
            <person name="Yokoi T."/>
            <person name="Furuya T."/>
            <person name="Kikkawa E."/>
            <person name="Omura Y."/>
            <person name="Abe K."/>
            <person name="Kamihara K."/>
            <person name="Katsuta N."/>
            <person name="Sato K."/>
            <person name="Tanikawa M."/>
            <person name="Yamazaki M."/>
            <person name="Ninomiya K."/>
            <person name="Ishibashi T."/>
            <person name="Yamashita H."/>
            <person name="Murakawa K."/>
            <person name="Fujimori K."/>
            <person name="Tanai H."/>
            <person name="Kimata M."/>
            <person name="Watanabe M."/>
            <person name="Hiraoka S."/>
            <person name="Chiba Y."/>
            <person name="Ishida S."/>
            <person name="Ono Y."/>
            <person name="Takiguchi S."/>
            <person name="Watanabe S."/>
            <person name="Yosida M."/>
            <person name="Hotuta T."/>
            <person name="Kusano J."/>
            <person name="Kanehori K."/>
            <person name="Takahashi-Fujii A."/>
            <person name="Hara H."/>
            <person name="Tanase T.-O."/>
            <person name="Nomura Y."/>
            <person name="Togiya S."/>
            <person name="Komai F."/>
            <person name="Hara R."/>
            <person name="Takeuchi K."/>
            <person name="Arita M."/>
            <person name="Imose N."/>
            <person name="Musashino K."/>
            <person name="Yuuki H."/>
            <person name="Oshima A."/>
            <person name="Sasaki N."/>
            <person name="Aotsuka S."/>
            <person name="Yoshikawa Y."/>
            <person name="Matsunawa H."/>
            <person name="Ichihara T."/>
            <person name="Shiohata N."/>
            <person name="Sano S."/>
            <person name="Moriya S."/>
            <person name="Momiyama H."/>
            <person name="Satoh N."/>
            <person name="Takami S."/>
            <person name="Terashima Y."/>
            <person name="Suzuki O."/>
            <person name="Nakagawa S."/>
            <person name="Senoh A."/>
            <person name="Mizoguchi H."/>
            <person name="Goto Y."/>
            <person name="Shimizu F."/>
            <person name="Wakebe H."/>
            <person name="Hishigaki H."/>
            <person name="Watanabe T."/>
            <person name="Sugiyama A."/>
            <person name="Takemoto M."/>
            <person name="Kawakami B."/>
            <person name="Yamazaki M."/>
            <person name="Watanabe K."/>
            <person name="Kumagai A."/>
            <person name="Itakura S."/>
            <person name="Fukuzumi Y."/>
            <person name="Fujimori Y."/>
            <person name="Komiyama M."/>
            <person name="Tashiro H."/>
            <person name="Tanigami A."/>
            <person name="Fujiwara T."/>
            <person name="Ono T."/>
            <person name="Yamada K."/>
            <person name="Fujii Y."/>
            <person name="Ozaki K."/>
            <person name="Hirao M."/>
            <person name="Ohmori Y."/>
            <person name="Kawabata A."/>
            <person name="Hikiji T."/>
            <person name="Kobatake N."/>
            <person name="Inagaki H."/>
            <person name="Ikema Y."/>
            <person name="Okamoto S."/>
            <person name="Okitani R."/>
            <person name="Kawakami T."/>
            <person name="Noguchi S."/>
            <person name="Itoh T."/>
            <person name="Shigeta K."/>
            <person name="Senba T."/>
            <person name="Matsumura K."/>
            <person name="Nakajima Y."/>
            <person name="Mizuno T."/>
            <person name="Morinaga M."/>
            <person name="Sasaki M."/>
            <person name="Togashi T."/>
            <person name="Oyama M."/>
            <person name="Hata H."/>
            <person name="Watanabe M."/>
            <person name="Komatsu T."/>
            <person name="Mizushima-Sugano J."/>
            <person name="Satoh T."/>
            <person name="Shirai Y."/>
            <person name="Takahashi Y."/>
            <person name="Nakagawa K."/>
            <person name="Okumura K."/>
            <person name="Nagase T."/>
            <person name="Nomura N."/>
            <person name="Kikuchi H."/>
            <person name="Masuho Y."/>
            <person name="Yamashita R."/>
            <person name="Nakai K."/>
            <person name="Yada T."/>
            <person name="Nakamura Y."/>
            <person name="Ohara O."/>
            <person name="Isogai T."/>
            <person name="Sugano S."/>
        </authorList>
    </citation>
    <scope>NUCLEOTIDE SEQUENCE [LARGE SCALE MRNA]</scope>
    <source>
        <tissue>Brain</tissue>
    </source>
</reference>
<reference key="3">
    <citation type="journal article" date="2004" name="Nature">
        <title>The sequence and analysis of duplication-rich human chromosome 16.</title>
        <authorList>
            <person name="Martin J."/>
            <person name="Han C."/>
            <person name="Gordon L.A."/>
            <person name="Terry A."/>
            <person name="Prabhakar S."/>
            <person name="She X."/>
            <person name="Xie G."/>
            <person name="Hellsten U."/>
            <person name="Chan Y.M."/>
            <person name="Altherr M."/>
            <person name="Couronne O."/>
            <person name="Aerts A."/>
            <person name="Bajorek E."/>
            <person name="Black S."/>
            <person name="Blumer H."/>
            <person name="Branscomb E."/>
            <person name="Brown N.C."/>
            <person name="Bruno W.J."/>
            <person name="Buckingham J.M."/>
            <person name="Callen D.F."/>
            <person name="Campbell C.S."/>
            <person name="Campbell M.L."/>
            <person name="Campbell E.W."/>
            <person name="Caoile C."/>
            <person name="Challacombe J.F."/>
            <person name="Chasteen L.A."/>
            <person name="Chertkov O."/>
            <person name="Chi H.C."/>
            <person name="Christensen M."/>
            <person name="Clark L.M."/>
            <person name="Cohn J.D."/>
            <person name="Denys M."/>
            <person name="Detter J.C."/>
            <person name="Dickson M."/>
            <person name="Dimitrijevic-Bussod M."/>
            <person name="Escobar J."/>
            <person name="Fawcett J.J."/>
            <person name="Flowers D."/>
            <person name="Fotopulos D."/>
            <person name="Glavina T."/>
            <person name="Gomez M."/>
            <person name="Gonzales E."/>
            <person name="Goodstein D."/>
            <person name="Goodwin L.A."/>
            <person name="Grady D.L."/>
            <person name="Grigoriev I."/>
            <person name="Groza M."/>
            <person name="Hammon N."/>
            <person name="Hawkins T."/>
            <person name="Haydu L."/>
            <person name="Hildebrand C.E."/>
            <person name="Huang W."/>
            <person name="Israni S."/>
            <person name="Jett J."/>
            <person name="Jewett P.B."/>
            <person name="Kadner K."/>
            <person name="Kimball H."/>
            <person name="Kobayashi A."/>
            <person name="Krawczyk M.-C."/>
            <person name="Leyba T."/>
            <person name="Longmire J.L."/>
            <person name="Lopez F."/>
            <person name="Lou Y."/>
            <person name="Lowry S."/>
            <person name="Ludeman T."/>
            <person name="Manohar C.F."/>
            <person name="Mark G.A."/>
            <person name="McMurray K.L."/>
            <person name="Meincke L.J."/>
            <person name="Morgan J."/>
            <person name="Moyzis R.K."/>
            <person name="Mundt M.O."/>
            <person name="Munk A.C."/>
            <person name="Nandkeshwar R.D."/>
            <person name="Pitluck S."/>
            <person name="Pollard M."/>
            <person name="Predki P."/>
            <person name="Parson-Quintana B."/>
            <person name="Ramirez L."/>
            <person name="Rash S."/>
            <person name="Retterer J."/>
            <person name="Ricke D.O."/>
            <person name="Robinson D.L."/>
            <person name="Rodriguez A."/>
            <person name="Salamov A."/>
            <person name="Saunders E.H."/>
            <person name="Scott D."/>
            <person name="Shough T."/>
            <person name="Stallings R.L."/>
            <person name="Stalvey M."/>
            <person name="Sutherland R.D."/>
            <person name="Tapia R."/>
            <person name="Tesmer J.G."/>
            <person name="Thayer N."/>
            <person name="Thompson L.S."/>
            <person name="Tice H."/>
            <person name="Torney D.C."/>
            <person name="Tran-Gyamfi M."/>
            <person name="Tsai M."/>
            <person name="Ulanovsky L.E."/>
            <person name="Ustaszewska A."/>
            <person name="Vo N."/>
            <person name="White P.S."/>
            <person name="Williams A.L."/>
            <person name="Wills P.L."/>
            <person name="Wu J.-R."/>
            <person name="Wu K."/>
            <person name="Yang J."/>
            <person name="DeJong P."/>
            <person name="Bruce D."/>
            <person name="Doggett N.A."/>
            <person name="Deaven L."/>
            <person name="Schmutz J."/>
            <person name="Grimwood J."/>
            <person name="Richardson P."/>
            <person name="Rokhsar D.S."/>
            <person name="Eichler E.E."/>
            <person name="Gilna P."/>
            <person name="Lucas S.M."/>
            <person name="Myers R.M."/>
            <person name="Rubin E.M."/>
            <person name="Pennacchio L.A."/>
        </authorList>
    </citation>
    <scope>NUCLEOTIDE SEQUENCE [LARGE SCALE GENOMIC DNA]</scope>
</reference>
<reference key="4">
    <citation type="submission" date="2005-09" db="EMBL/GenBank/DDBJ databases">
        <authorList>
            <person name="Mural R.J."/>
            <person name="Istrail S."/>
            <person name="Sutton G.G."/>
            <person name="Florea L."/>
            <person name="Halpern A.L."/>
            <person name="Mobarry C.M."/>
            <person name="Lippert R."/>
            <person name="Walenz B."/>
            <person name="Shatkay H."/>
            <person name="Dew I."/>
            <person name="Miller J.R."/>
            <person name="Flanigan M.J."/>
            <person name="Edwards N.J."/>
            <person name="Bolanos R."/>
            <person name="Fasulo D."/>
            <person name="Halldorsson B.V."/>
            <person name="Hannenhalli S."/>
            <person name="Turner R."/>
            <person name="Yooseph S."/>
            <person name="Lu F."/>
            <person name="Nusskern D.R."/>
            <person name="Shue B.C."/>
            <person name="Zheng X.H."/>
            <person name="Zhong F."/>
            <person name="Delcher A.L."/>
            <person name="Huson D.H."/>
            <person name="Kravitz S.A."/>
            <person name="Mouchard L."/>
            <person name="Reinert K."/>
            <person name="Remington K.A."/>
            <person name="Clark A.G."/>
            <person name="Waterman M.S."/>
            <person name="Eichler E.E."/>
            <person name="Adams M.D."/>
            <person name="Hunkapiller M.W."/>
            <person name="Myers E.W."/>
            <person name="Venter J.C."/>
        </authorList>
    </citation>
    <scope>NUCLEOTIDE SEQUENCE [LARGE SCALE GENOMIC DNA]</scope>
</reference>
<reference key="5">
    <citation type="journal article" date="2001" name="Development">
        <title>Identification of NKL, a novel Gli-Kruppel zinc-finger protein that promotes neuronal differentiation.</title>
        <authorList>
            <person name="Lamar E."/>
            <person name="Kintner C."/>
            <person name="Goulding M."/>
        </authorList>
    </citation>
    <scope>IDENTIFICATION</scope>
</reference>
<reference key="6">
    <citation type="journal article" date="2007" name="FEBS Lett.">
        <title>The Kruppel-like zinc finger protein Glis2 functions as a negative modulator of the Wnt/beta-catenin signaling pathway.</title>
        <authorList>
            <person name="Kim Y.-S."/>
            <person name="Kang H.S."/>
            <person name="Jetten A.M."/>
        </authorList>
    </citation>
    <scope>TISSUE SPECIFICITY</scope>
</reference>
<reference key="7">
    <citation type="journal article" date="2007" name="Mol. Biol. Cell">
        <title>The transcriptional repressor Glis2 is a novel binding partner for p120 catenin.</title>
        <authorList>
            <person name="Hosking C.R."/>
            <person name="Ulloa F."/>
            <person name="Hogan C."/>
            <person name="Ferber E.C."/>
            <person name="Figueroa A."/>
            <person name="Gevaert K."/>
            <person name="Birchmeier W."/>
            <person name="Briscoe J."/>
            <person name="Fujita Y."/>
        </authorList>
    </citation>
    <scope>INTERACTION WITH CTNND1</scope>
</reference>
<reference key="8">
    <citation type="journal article" date="2007" name="Nat. Genet.">
        <title>Loss of GLIS2 causes nephronophthisis in humans and mice by increased apoptosis and fibrosis.</title>
        <authorList>
            <person name="Attanasio M."/>
            <person name="Uhlenhaut N.H."/>
            <person name="Sousa V.H."/>
            <person name="O'Toole J.F."/>
            <person name="Otto E."/>
            <person name="Anlag K."/>
            <person name="Klugmann C."/>
            <person name="Treier A.-C."/>
            <person name="Helou J."/>
            <person name="Sayer J.A."/>
            <person name="Seelow D."/>
            <person name="Nuernberg G."/>
            <person name="Becker C."/>
            <person name="Chudley A.E."/>
            <person name="Nuernberg P."/>
            <person name="Hildebrandt F."/>
            <person name="Treier M."/>
        </authorList>
    </citation>
    <scope>INVOLVEMENT IN NPHP7</scope>
</reference>
<evidence type="ECO:0000250" key="1"/>
<evidence type="ECO:0000255" key="2">
    <source>
        <dbReference type="PROSITE-ProRule" id="PRU00042"/>
    </source>
</evidence>
<evidence type="ECO:0000256" key="3">
    <source>
        <dbReference type="SAM" id="MobiDB-lite"/>
    </source>
</evidence>
<evidence type="ECO:0000269" key="4">
    <source>
    </source>
</evidence>
<evidence type="ECO:0000269" key="5">
    <source>
    </source>
</evidence>
<evidence type="ECO:0000269" key="6">
    <source>
    </source>
</evidence>
<evidence type="ECO:0000269" key="7">
    <source>
    </source>
</evidence>
<evidence type="ECO:0000305" key="8"/>
<protein>
    <recommendedName>
        <fullName>Zinc finger protein GLIS2</fullName>
    </recommendedName>
    <alternativeName>
        <fullName>GLI-similar 2</fullName>
    </alternativeName>
    <alternativeName>
        <fullName>Neuronal Krueppel-like protein</fullName>
    </alternativeName>
</protein>
<keyword id="KW-0010">Activator</keyword>
<keyword id="KW-1186">Ciliopathy</keyword>
<keyword id="KW-0963">Cytoplasm</keyword>
<keyword id="KW-0217">Developmental protein</keyword>
<keyword id="KW-0221">Differentiation</keyword>
<keyword id="KW-0238">DNA-binding</keyword>
<keyword id="KW-0479">Metal-binding</keyword>
<keyword id="KW-0983">Nephronophthisis</keyword>
<keyword id="KW-0524">Neurogenesis</keyword>
<keyword id="KW-0539">Nucleus</keyword>
<keyword id="KW-1267">Proteomics identification</keyword>
<keyword id="KW-1185">Reference proteome</keyword>
<keyword id="KW-0677">Repeat</keyword>
<keyword id="KW-0678">Repressor</keyword>
<keyword id="KW-0804">Transcription</keyword>
<keyword id="KW-0805">Transcription regulation</keyword>
<keyword id="KW-0862">Zinc</keyword>
<keyword id="KW-0863">Zinc-finger</keyword>
<proteinExistence type="evidence at protein level"/>
<sequence length="524" mass="55689">MHSLDEPLDLKLSITKLRAAREKRERTLGVVRPRALHRELGLVDDSPTPGSPGSPPSGFLLNSKFPEKVEGRFSAAPLVDLSLSPPSGLDSPNGSSSLSPERQGNGDLPPVPSASDFQPLRYLDGVPSSFQFFLPLGSGGALHLPASSFLTPPKDKCLSPDLPLPKQLVCRWAKCNQLFELLQDLVDHVNDYHVKPEKDAGYCCHWEGCARHGRGFNARYKMLIHIRTHTNEKPHRCPTCSKSFSRLENLKIHNRSHTGEKPYVCPYEGCNKRYSNSSDRFKHTRTHYVDKPYYCKMPGCHKRYTDPSSLRKHIKAHGHFVSHEQQELLQLRPPPKPPLPAPDGGPYVSGAQIIIPNPAALFGGPGLPGLPLPLAPGPLDLSALACGNGGGSGGGGGMGPGLPGPVLPLNLAKNPLLPSPFGAGGLGLPVVSLLAGAAGGKAEGEKGRGSVPTRALGMEGHKTPLERTESSCSRPSPDGLPLLPGTVLDLSTGVNSAASSPEALAPGWVVIPPGSVLLKPAVVN</sequence>
<gene>
    <name type="primary">GLIS2</name>
    <name type="synonym">NKL</name>
</gene>
<accession>Q9BZE0</accession>
<accession>B3KX84</accession>